<evidence type="ECO:0000255" key="1">
    <source>
        <dbReference type="HAMAP-Rule" id="MF_00009"/>
    </source>
</evidence>
<gene>
    <name evidence="1" type="primary">ybeY</name>
    <name type="ordered locus">VSAL_I0994</name>
</gene>
<organism>
    <name type="scientific">Aliivibrio salmonicida (strain LFI1238)</name>
    <name type="common">Vibrio salmonicida (strain LFI1238)</name>
    <dbReference type="NCBI Taxonomy" id="316275"/>
    <lineage>
        <taxon>Bacteria</taxon>
        <taxon>Pseudomonadati</taxon>
        <taxon>Pseudomonadota</taxon>
        <taxon>Gammaproteobacteria</taxon>
        <taxon>Vibrionales</taxon>
        <taxon>Vibrionaceae</taxon>
        <taxon>Aliivibrio</taxon>
    </lineage>
</organism>
<accession>B6EIN6</accession>
<keyword id="KW-0963">Cytoplasm</keyword>
<keyword id="KW-0255">Endonuclease</keyword>
<keyword id="KW-0378">Hydrolase</keyword>
<keyword id="KW-0479">Metal-binding</keyword>
<keyword id="KW-0540">Nuclease</keyword>
<keyword id="KW-0690">Ribosome biogenesis</keyword>
<keyword id="KW-0698">rRNA processing</keyword>
<keyword id="KW-0862">Zinc</keyword>
<comment type="function">
    <text evidence="1">Single strand-specific metallo-endoribonuclease involved in late-stage 70S ribosome quality control and in maturation of the 3' terminus of the 16S rRNA.</text>
</comment>
<comment type="cofactor">
    <cofactor evidence="1">
        <name>Zn(2+)</name>
        <dbReference type="ChEBI" id="CHEBI:29105"/>
    </cofactor>
    <text evidence="1">Binds 1 zinc ion.</text>
</comment>
<comment type="subcellular location">
    <subcellularLocation>
        <location evidence="1">Cytoplasm</location>
    </subcellularLocation>
</comment>
<comment type="similarity">
    <text evidence="1">Belongs to the endoribonuclease YbeY family.</text>
</comment>
<proteinExistence type="inferred from homology"/>
<feature type="chain" id="PRO_1000089146" description="Endoribonuclease YbeY">
    <location>
        <begin position="1"/>
        <end position="153"/>
    </location>
</feature>
<feature type="binding site" evidence="1">
    <location>
        <position position="113"/>
    </location>
    <ligand>
        <name>Zn(2+)</name>
        <dbReference type="ChEBI" id="CHEBI:29105"/>
        <note>catalytic</note>
    </ligand>
</feature>
<feature type="binding site" evidence="1">
    <location>
        <position position="117"/>
    </location>
    <ligand>
        <name>Zn(2+)</name>
        <dbReference type="ChEBI" id="CHEBI:29105"/>
        <note>catalytic</note>
    </ligand>
</feature>
<feature type="binding site" evidence="1">
    <location>
        <position position="123"/>
    </location>
    <ligand>
        <name>Zn(2+)</name>
        <dbReference type="ChEBI" id="CHEBI:29105"/>
        <note>catalytic</note>
    </ligand>
</feature>
<name>YBEY_ALISL</name>
<reference key="1">
    <citation type="journal article" date="2008" name="BMC Genomics">
        <title>The genome sequence of the fish pathogen Aliivibrio salmonicida strain LFI1238 shows extensive evidence of gene decay.</title>
        <authorList>
            <person name="Hjerde E."/>
            <person name="Lorentzen M.S."/>
            <person name="Holden M.T."/>
            <person name="Seeger K."/>
            <person name="Paulsen S."/>
            <person name="Bason N."/>
            <person name="Churcher C."/>
            <person name="Harris D."/>
            <person name="Norbertczak H."/>
            <person name="Quail M.A."/>
            <person name="Sanders S."/>
            <person name="Thurston S."/>
            <person name="Parkhill J."/>
            <person name="Willassen N.P."/>
            <person name="Thomson N.R."/>
        </authorList>
    </citation>
    <scope>NUCLEOTIDE SEQUENCE [LARGE SCALE GENOMIC DNA]</scope>
    <source>
        <strain>LFI1238</strain>
    </source>
</reference>
<protein>
    <recommendedName>
        <fullName evidence="1">Endoribonuclease YbeY</fullName>
        <ecNumber evidence="1">3.1.-.-</ecNumber>
    </recommendedName>
</protein>
<dbReference type="EC" id="3.1.-.-" evidence="1"/>
<dbReference type="EMBL" id="FM178379">
    <property type="protein sequence ID" value="CAQ78679.1"/>
    <property type="molecule type" value="Genomic_DNA"/>
</dbReference>
<dbReference type="RefSeq" id="WP_012549758.1">
    <property type="nucleotide sequence ID" value="NC_011312.1"/>
</dbReference>
<dbReference type="SMR" id="B6EIN6"/>
<dbReference type="KEGG" id="vsa:VSAL_I0994"/>
<dbReference type="eggNOG" id="COG0319">
    <property type="taxonomic scope" value="Bacteria"/>
</dbReference>
<dbReference type="HOGENOM" id="CLU_106710_0_1_6"/>
<dbReference type="Proteomes" id="UP000001730">
    <property type="component" value="Chromosome 1"/>
</dbReference>
<dbReference type="GO" id="GO:0005737">
    <property type="term" value="C:cytoplasm"/>
    <property type="evidence" value="ECO:0007669"/>
    <property type="project" value="UniProtKB-SubCell"/>
</dbReference>
<dbReference type="GO" id="GO:0004222">
    <property type="term" value="F:metalloendopeptidase activity"/>
    <property type="evidence" value="ECO:0007669"/>
    <property type="project" value="InterPro"/>
</dbReference>
<dbReference type="GO" id="GO:0004521">
    <property type="term" value="F:RNA endonuclease activity"/>
    <property type="evidence" value="ECO:0007669"/>
    <property type="project" value="UniProtKB-UniRule"/>
</dbReference>
<dbReference type="GO" id="GO:0008270">
    <property type="term" value="F:zinc ion binding"/>
    <property type="evidence" value="ECO:0007669"/>
    <property type="project" value="UniProtKB-UniRule"/>
</dbReference>
<dbReference type="GO" id="GO:0006364">
    <property type="term" value="P:rRNA processing"/>
    <property type="evidence" value="ECO:0007669"/>
    <property type="project" value="UniProtKB-UniRule"/>
</dbReference>
<dbReference type="Gene3D" id="3.40.390.30">
    <property type="entry name" value="Metalloproteases ('zincins'), catalytic domain"/>
    <property type="match status" value="1"/>
</dbReference>
<dbReference type="HAMAP" id="MF_00009">
    <property type="entry name" value="Endoribonucl_YbeY"/>
    <property type="match status" value="1"/>
</dbReference>
<dbReference type="InterPro" id="IPR023091">
    <property type="entry name" value="MetalPrtase_cat_dom_sf_prd"/>
</dbReference>
<dbReference type="InterPro" id="IPR002036">
    <property type="entry name" value="YbeY"/>
</dbReference>
<dbReference type="InterPro" id="IPR020549">
    <property type="entry name" value="YbeY_CS"/>
</dbReference>
<dbReference type="NCBIfam" id="TIGR00043">
    <property type="entry name" value="rRNA maturation RNase YbeY"/>
    <property type="match status" value="1"/>
</dbReference>
<dbReference type="PANTHER" id="PTHR46986">
    <property type="entry name" value="ENDORIBONUCLEASE YBEY, CHLOROPLASTIC"/>
    <property type="match status" value="1"/>
</dbReference>
<dbReference type="PANTHER" id="PTHR46986:SF1">
    <property type="entry name" value="ENDORIBONUCLEASE YBEY, CHLOROPLASTIC"/>
    <property type="match status" value="1"/>
</dbReference>
<dbReference type="Pfam" id="PF02130">
    <property type="entry name" value="YbeY"/>
    <property type="match status" value="1"/>
</dbReference>
<dbReference type="SUPFAM" id="SSF55486">
    <property type="entry name" value="Metalloproteases ('zincins'), catalytic domain"/>
    <property type="match status" value="1"/>
</dbReference>
<dbReference type="PROSITE" id="PS01306">
    <property type="entry name" value="UPF0054"/>
    <property type="match status" value="1"/>
</dbReference>
<sequence length="153" mass="17700">MSIELDLQIACENEKDLPSEKDFMSWLNAVLPQFQPQAELTIRIVDEKESHELNHQYRGMDKPTNVLSFPFEAPPEVEIDLLGDLIICRQVVEKEAVEQNKPLLAHWAHMVVHGSLHLLGYDHIEDEEAEEMESLETELMQEMGFEDPYLAEK</sequence>